<reference key="1">
    <citation type="journal article" date="2004" name="Nat. Genet.">
        <title>Comparison of genome degradation in Paratyphi A and Typhi, human-restricted serovars of Salmonella enterica that cause typhoid.</title>
        <authorList>
            <person name="McClelland M."/>
            <person name="Sanderson K.E."/>
            <person name="Clifton S.W."/>
            <person name="Latreille P."/>
            <person name="Porwollik S."/>
            <person name="Sabo A."/>
            <person name="Meyer R."/>
            <person name="Bieri T."/>
            <person name="Ozersky P."/>
            <person name="McLellan M."/>
            <person name="Harkins C.R."/>
            <person name="Wang C."/>
            <person name="Nguyen C."/>
            <person name="Berghoff A."/>
            <person name="Elliott G."/>
            <person name="Kohlberg S."/>
            <person name="Strong C."/>
            <person name="Du F."/>
            <person name="Carter J."/>
            <person name="Kremizki C."/>
            <person name="Layman D."/>
            <person name="Leonard S."/>
            <person name="Sun H."/>
            <person name="Fulton L."/>
            <person name="Nash W."/>
            <person name="Miner T."/>
            <person name="Minx P."/>
            <person name="Delehaunty K."/>
            <person name="Fronick C."/>
            <person name="Magrini V."/>
            <person name="Nhan M."/>
            <person name="Warren W."/>
            <person name="Florea L."/>
            <person name="Spieth J."/>
            <person name="Wilson R.K."/>
        </authorList>
    </citation>
    <scope>NUCLEOTIDE SEQUENCE [LARGE SCALE GENOMIC DNA]</scope>
    <source>
        <strain>ATCC 9150 / SARB42</strain>
    </source>
</reference>
<proteinExistence type="inferred from homology"/>
<keyword id="KW-0021">Allosteric enzyme</keyword>
<keyword id="KW-0119">Carbohydrate metabolism</keyword>
<keyword id="KW-0378">Hydrolase</keyword>
<accession>Q5PCH6</accession>
<organism>
    <name type="scientific">Salmonella paratyphi A (strain ATCC 9150 / SARB42)</name>
    <dbReference type="NCBI Taxonomy" id="295319"/>
    <lineage>
        <taxon>Bacteria</taxon>
        <taxon>Pseudomonadati</taxon>
        <taxon>Pseudomonadota</taxon>
        <taxon>Gammaproteobacteria</taxon>
        <taxon>Enterobacterales</taxon>
        <taxon>Enterobacteriaceae</taxon>
        <taxon>Salmonella</taxon>
    </lineage>
</organism>
<dbReference type="EC" id="3.5.99.6" evidence="1"/>
<dbReference type="EMBL" id="CP000026">
    <property type="protein sequence ID" value="AAV77959.1"/>
    <property type="molecule type" value="Genomic_DNA"/>
</dbReference>
<dbReference type="RefSeq" id="WP_001237059.1">
    <property type="nucleotide sequence ID" value="NC_006511.1"/>
</dbReference>
<dbReference type="SMR" id="Q5PCH6"/>
<dbReference type="KEGG" id="spt:SPA2057"/>
<dbReference type="HOGENOM" id="CLU_049611_0_1_6"/>
<dbReference type="UniPathway" id="UPA00629">
    <property type="reaction ID" value="UER00684"/>
</dbReference>
<dbReference type="Proteomes" id="UP000008185">
    <property type="component" value="Chromosome"/>
</dbReference>
<dbReference type="GO" id="GO:0005737">
    <property type="term" value="C:cytoplasm"/>
    <property type="evidence" value="ECO:0007669"/>
    <property type="project" value="TreeGrafter"/>
</dbReference>
<dbReference type="GO" id="GO:0004342">
    <property type="term" value="F:glucosamine-6-phosphate deaminase activity"/>
    <property type="evidence" value="ECO:0007669"/>
    <property type="project" value="UniProtKB-UniRule"/>
</dbReference>
<dbReference type="GO" id="GO:0042802">
    <property type="term" value="F:identical protein binding"/>
    <property type="evidence" value="ECO:0007669"/>
    <property type="project" value="TreeGrafter"/>
</dbReference>
<dbReference type="GO" id="GO:0005975">
    <property type="term" value="P:carbohydrate metabolic process"/>
    <property type="evidence" value="ECO:0007669"/>
    <property type="project" value="InterPro"/>
</dbReference>
<dbReference type="GO" id="GO:0006043">
    <property type="term" value="P:glucosamine catabolic process"/>
    <property type="evidence" value="ECO:0007669"/>
    <property type="project" value="TreeGrafter"/>
</dbReference>
<dbReference type="GO" id="GO:0006046">
    <property type="term" value="P:N-acetylglucosamine catabolic process"/>
    <property type="evidence" value="ECO:0007669"/>
    <property type="project" value="TreeGrafter"/>
</dbReference>
<dbReference type="GO" id="GO:0019262">
    <property type="term" value="P:N-acetylneuraminate catabolic process"/>
    <property type="evidence" value="ECO:0007669"/>
    <property type="project" value="UniProtKB-UniRule"/>
</dbReference>
<dbReference type="CDD" id="cd01399">
    <property type="entry name" value="GlcN6P_deaminase"/>
    <property type="match status" value="1"/>
</dbReference>
<dbReference type="FunFam" id="3.40.50.1360:FF:000002">
    <property type="entry name" value="Glucosamine-6-phosphate deaminase"/>
    <property type="match status" value="1"/>
</dbReference>
<dbReference type="Gene3D" id="3.40.50.1360">
    <property type="match status" value="1"/>
</dbReference>
<dbReference type="HAMAP" id="MF_01241">
    <property type="entry name" value="GlcN6P_deamin"/>
    <property type="match status" value="1"/>
</dbReference>
<dbReference type="InterPro" id="IPR006148">
    <property type="entry name" value="Glc/Gal-6P_isomerase"/>
</dbReference>
<dbReference type="InterPro" id="IPR004547">
    <property type="entry name" value="Glucosamine6P_isomerase"/>
</dbReference>
<dbReference type="InterPro" id="IPR018321">
    <property type="entry name" value="Glucosamine6P_isomerase_CS"/>
</dbReference>
<dbReference type="InterPro" id="IPR037171">
    <property type="entry name" value="NagB/RpiA_transferase-like"/>
</dbReference>
<dbReference type="NCBIfam" id="TIGR00502">
    <property type="entry name" value="nagB"/>
    <property type="match status" value="1"/>
</dbReference>
<dbReference type="NCBIfam" id="NF001685">
    <property type="entry name" value="PRK00443.1-5"/>
    <property type="match status" value="1"/>
</dbReference>
<dbReference type="PANTHER" id="PTHR11280">
    <property type="entry name" value="GLUCOSAMINE-6-PHOSPHATE ISOMERASE"/>
    <property type="match status" value="1"/>
</dbReference>
<dbReference type="PANTHER" id="PTHR11280:SF5">
    <property type="entry name" value="GLUCOSAMINE-6-PHOSPHATE ISOMERASE"/>
    <property type="match status" value="1"/>
</dbReference>
<dbReference type="Pfam" id="PF01182">
    <property type="entry name" value="Glucosamine_iso"/>
    <property type="match status" value="1"/>
</dbReference>
<dbReference type="SUPFAM" id="SSF100950">
    <property type="entry name" value="NagB/RpiA/CoA transferase-like"/>
    <property type="match status" value="1"/>
</dbReference>
<dbReference type="PROSITE" id="PS01161">
    <property type="entry name" value="GLC_GALNAC_ISOMERASE"/>
    <property type="match status" value="1"/>
</dbReference>
<comment type="function">
    <text evidence="1">Catalyzes the reversible isomerization-deamination of glucosamine 6-phosphate (GlcN6P) to form fructose 6-phosphate (Fru6P) and ammonium ion.</text>
</comment>
<comment type="catalytic activity">
    <reaction evidence="1">
        <text>alpha-D-glucosamine 6-phosphate + H2O = beta-D-fructose 6-phosphate + NH4(+)</text>
        <dbReference type="Rhea" id="RHEA:12172"/>
        <dbReference type="ChEBI" id="CHEBI:15377"/>
        <dbReference type="ChEBI" id="CHEBI:28938"/>
        <dbReference type="ChEBI" id="CHEBI:57634"/>
        <dbReference type="ChEBI" id="CHEBI:75989"/>
        <dbReference type="EC" id="3.5.99.6"/>
    </reaction>
</comment>
<comment type="activity regulation">
    <text evidence="1">Allosterically activated by N-acetylglucosamine 6-phosphate (GlcNAc6P).</text>
</comment>
<comment type="pathway">
    <text evidence="1">Amino-sugar metabolism; N-acetylneuraminate degradation; D-fructose 6-phosphate from N-acetylneuraminate: step 5/5.</text>
</comment>
<comment type="subunit">
    <text evidence="1">Homohexamer.</text>
</comment>
<comment type="similarity">
    <text evidence="1">Belongs to the glucosamine/galactosamine-6-phosphate isomerase family. NagB subfamily.</text>
</comment>
<protein>
    <recommendedName>
        <fullName evidence="1">Glucosamine-6-phosphate deaminase</fullName>
        <ecNumber evidence="1">3.5.99.6</ecNumber>
    </recommendedName>
    <alternativeName>
        <fullName evidence="1">GlcN6P deaminase</fullName>
        <shortName evidence="1">GNPDA</shortName>
    </alternativeName>
    <alternativeName>
        <fullName evidence="1">Glucosamine-6-phosphate isomerase</fullName>
    </alternativeName>
</protein>
<name>NAGB_SALPA</name>
<sequence>MRLIPLSTAEQVGKWAARHIVNRINAFKPTADRPFVLGLPTGGTPLTAYKALVEMHKAGEVSFKHVVTFNMDEYVGLPKEHPESYHSFMHRNFFDHVDIPAENINLLNGNAPDIDAECRQYEEKIRSYGKIHLFMGGVGNDGHIAFNEPASSLASRTRIKTLTHDTRVANSRFFDGDVNQVPKYALTVGVGTLLDAEEVMILVLGHQKAQALQAAVEGNVNHMWTISCLQLHPKAVVVCDEPSTMELKVKTLKYFNELEAENIKGL</sequence>
<evidence type="ECO:0000255" key="1">
    <source>
        <dbReference type="HAMAP-Rule" id="MF_01241"/>
    </source>
</evidence>
<gene>
    <name evidence="1" type="primary">nagB</name>
    <name type="ordered locus">SPA2057</name>
</gene>
<feature type="chain" id="PRO_1000067015" description="Glucosamine-6-phosphate deaminase">
    <location>
        <begin position="1"/>
        <end position="266"/>
    </location>
</feature>
<feature type="active site" description="Proton acceptor; for enolization step" evidence="1">
    <location>
        <position position="72"/>
    </location>
</feature>
<feature type="active site" description="For ring-opening step" evidence="1">
    <location>
        <position position="141"/>
    </location>
</feature>
<feature type="active site" description="Proton acceptor; for ring-opening step" evidence="1">
    <location>
        <position position="143"/>
    </location>
</feature>
<feature type="active site" description="For ring-opening step" evidence="1">
    <location>
        <position position="148"/>
    </location>
</feature>
<feature type="site" description="Part of the allosteric site" evidence="1">
    <location>
        <position position="151"/>
    </location>
</feature>
<feature type="site" description="Part of the allosteric site" evidence="1">
    <location>
        <position position="158"/>
    </location>
</feature>
<feature type="site" description="Part of the allosteric site" evidence="1">
    <location>
        <position position="160"/>
    </location>
</feature>
<feature type="site" description="Part of the allosteric site" evidence="1">
    <location>
        <position position="161"/>
    </location>
</feature>
<feature type="site" description="Part of the allosteric site" evidence="1">
    <location>
        <position position="254"/>
    </location>
</feature>